<sequence length="604" mass="68175">MRYLFLIILVAFAALTTAVPAGSSITPPPPIEPVQLLSPQSSDVRRPWTRVRDWIIETVWGLPKPTSYRLPFNHLSHDQSAPSRVQARYGSDVVLRFRLRNDKEAEALEQATEILFLDVWASTSDFVDVRLAEEVIPSLLGLLPDSLRTAYSPLIDNLPELIYTTYPTRRPIGLEGQPGFRPSVRQSAQLGDLFFQDYQPLSVIVPWMRLMASMFPSHVRMINVGISYEGREIPALRLGAGSNRAQSAPRRTIVMVGGSHAREWISTSTVTYVASNLISNFGKSRAVTRLLEDFDVVLVPTINPDGYVYTWEVDRLWRKSRQRTSLRFCPGIDLDRSWNFEWDGERTRSNPCSENYAGDEPFEGVEAAQFAQWALNETQNNNVDIVGFLDLHSYSQQVLYPFSFSCSSVPPTLETLEELAMGFAKVIRQTTHEIYDVTSACEGTVTATDKASAKTFFPVSGGGSALDWFYHQLHASFAYQIKLRDRGSYGFLIPSEYIVPTGKEIYNVVLKMGEFLVKETASPANKADINWDADLLVHDDSTRTSSSESVSDPLSEANIDSTSTVKATPLPFPEDTLDSEWVPFDQNEEENEEEQNWELRRRRR</sequence>
<accession>Q2TZK2</accession>
<protein>
    <recommendedName>
        <fullName evidence="7">Inactive metallocarboxypeptidase ecm14</fullName>
    </recommendedName>
</protein>
<organism>
    <name type="scientific">Aspergillus oryzae (strain ATCC 42149 / RIB 40)</name>
    <name type="common">Yellow koji mold</name>
    <dbReference type="NCBI Taxonomy" id="510516"/>
    <lineage>
        <taxon>Eukaryota</taxon>
        <taxon>Fungi</taxon>
        <taxon>Dikarya</taxon>
        <taxon>Ascomycota</taxon>
        <taxon>Pezizomycotina</taxon>
        <taxon>Eurotiomycetes</taxon>
        <taxon>Eurotiomycetidae</taxon>
        <taxon>Eurotiales</taxon>
        <taxon>Aspergillaceae</taxon>
        <taxon>Aspergillus</taxon>
        <taxon>Aspergillus subgen. Circumdati</taxon>
    </lineage>
</organism>
<name>ECM14_ASPOR</name>
<feature type="signal peptide" evidence="4">
    <location>
        <begin position="1"/>
        <end position="18"/>
    </location>
</feature>
<feature type="propeptide" id="PRO_0000453239" evidence="3">
    <location>
        <begin position="19"/>
        <end position="169"/>
    </location>
</feature>
<feature type="chain" id="PRO_0000411179" description="Inactive metallocarboxypeptidase ecm14">
    <location>
        <begin position="170"/>
        <end position="604"/>
    </location>
</feature>
<feature type="domain" description="Peptidase M14" evidence="5">
    <location>
        <begin position="197"/>
        <end position="516"/>
    </location>
</feature>
<feature type="region of interest" description="Disordered" evidence="6">
    <location>
        <begin position="542"/>
        <end position="604"/>
    </location>
</feature>
<feature type="compositionally biased region" description="Low complexity" evidence="6">
    <location>
        <begin position="543"/>
        <end position="555"/>
    </location>
</feature>
<feature type="compositionally biased region" description="Acidic residues" evidence="6">
    <location>
        <begin position="586"/>
        <end position="596"/>
    </location>
</feature>
<feature type="binding site" evidence="1">
    <location>
        <begin position="260"/>
        <end position="263"/>
    </location>
    <ligand>
        <name>substrate</name>
    </ligand>
</feature>
<feature type="binding site" evidence="5">
    <location>
        <position position="260"/>
    </location>
    <ligand>
        <name>Zn(2+)</name>
        <dbReference type="ChEBI" id="CHEBI:29105"/>
        <note>catalytic</note>
    </ligand>
</feature>
<feature type="binding site" evidence="5">
    <location>
        <position position="263"/>
    </location>
    <ligand>
        <name>Zn(2+)</name>
        <dbReference type="ChEBI" id="CHEBI:29105"/>
        <note>catalytic</note>
    </ligand>
</feature>
<feature type="binding site" evidence="1">
    <location>
        <position position="318"/>
    </location>
    <ligand>
        <name>substrate</name>
    </ligand>
</feature>
<feature type="binding site" evidence="1">
    <location>
        <begin position="335"/>
        <end position="336"/>
    </location>
    <ligand>
        <name>substrate</name>
    </ligand>
</feature>
<feature type="binding site" evidence="5">
    <location>
        <position position="392"/>
    </location>
    <ligand>
        <name>Zn(2+)</name>
        <dbReference type="ChEBI" id="CHEBI:29105"/>
        <note>catalytic</note>
    </ligand>
</feature>
<feature type="binding site" evidence="1">
    <location>
        <begin position="393"/>
        <end position="394"/>
    </location>
    <ligand>
        <name>substrate</name>
    </ligand>
</feature>
<feature type="glycosylation site" description="N-linked (GlcNAc...) asparagine" evidence="4">
    <location>
        <position position="376"/>
    </location>
</feature>
<feature type="disulfide bond" evidence="2">
    <location>
        <begin position="329"/>
        <end position="352"/>
    </location>
</feature>
<proteinExistence type="inferred from homology"/>
<dbReference type="EMBL" id="BA000055">
    <property type="protein sequence ID" value="BAE65263.1"/>
    <property type="molecule type" value="Genomic_DNA"/>
</dbReference>
<dbReference type="RefSeq" id="XP_001826396.1">
    <property type="nucleotide sequence ID" value="XM_001826344.2"/>
</dbReference>
<dbReference type="SMR" id="Q2TZK2"/>
<dbReference type="STRING" id="510516.Q2TZK2"/>
<dbReference type="GlyCosmos" id="Q2TZK2">
    <property type="glycosylation" value="1 site, No reported glycans"/>
</dbReference>
<dbReference type="EnsemblFungi" id="BAE65263">
    <property type="protein sequence ID" value="BAE65263"/>
    <property type="gene ID" value="AO090011000821"/>
</dbReference>
<dbReference type="GeneID" id="5998499"/>
<dbReference type="KEGG" id="aor:AO090011000821"/>
<dbReference type="VEuPathDB" id="FungiDB:AO090011000821"/>
<dbReference type="HOGENOM" id="CLU_019326_1_0_1"/>
<dbReference type="OMA" id="WFYHQLH"/>
<dbReference type="OrthoDB" id="86727at5052"/>
<dbReference type="Proteomes" id="UP000006564">
    <property type="component" value="Chromosome 7"/>
</dbReference>
<dbReference type="GO" id="GO:0005576">
    <property type="term" value="C:extracellular region"/>
    <property type="evidence" value="ECO:0007669"/>
    <property type="project" value="UniProtKB-SubCell"/>
</dbReference>
<dbReference type="GO" id="GO:0005773">
    <property type="term" value="C:vacuole"/>
    <property type="evidence" value="ECO:0007669"/>
    <property type="project" value="UniProtKB-SubCell"/>
</dbReference>
<dbReference type="GO" id="GO:0008270">
    <property type="term" value="F:zinc ion binding"/>
    <property type="evidence" value="ECO:0007669"/>
    <property type="project" value="InterPro"/>
</dbReference>
<dbReference type="GO" id="GO:0071555">
    <property type="term" value="P:cell wall organization"/>
    <property type="evidence" value="ECO:0007669"/>
    <property type="project" value="UniProtKB-KW"/>
</dbReference>
<dbReference type="GO" id="GO:0006508">
    <property type="term" value="P:proteolysis"/>
    <property type="evidence" value="ECO:0007669"/>
    <property type="project" value="InterPro"/>
</dbReference>
<dbReference type="CDD" id="cd03860">
    <property type="entry name" value="M14_CP_A-B_like"/>
    <property type="match status" value="1"/>
</dbReference>
<dbReference type="FunFam" id="3.40.630.10:FF:000060">
    <property type="entry name" value="Putative metallocarboxypeptidase ecm14"/>
    <property type="match status" value="1"/>
</dbReference>
<dbReference type="Gene3D" id="3.30.70.340">
    <property type="entry name" value="Metallocarboxypeptidase-like"/>
    <property type="match status" value="1"/>
</dbReference>
<dbReference type="Gene3D" id="3.40.630.10">
    <property type="entry name" value="Zn peptidases"/>
    <property type="match status" value="1"/>
</dbReference>
<dbReference type="InterPro" id="IPR036990">
    <property type="entry name" value="M14A-like_propep"/>
</dbReference>
<dbReference type="InterPro" id="IPR000834">
    <property type="entry name" value="Peptidase_M14"/>
</dbReference>
<dbReference type="PANTHER" id="PTHR11705:SF147">
    <property type="entry name" value="INACTIVE METALLOCARBOXYPEPTIDASE ECM14"/>
    <property type="match status" value="1"/>
</dbReference>
<dbReference type="PANTHER" id="PTHR11705">
    <property type="entry name" value="PROTEASE FAMILY M14 CARBOXYPEPTIDASE A,B"/>
    <property type="match status" value="1"/>
</dbReference>
<dbReference type="Pfam" id="PF00246">
    <property type="entry name" value="Peptidase_M14"/>
    <property type="match status" value="1"/>
</dbReference>
<dbReference type="PRINTS" id="PR00765">
    <property type="entry name" value="CRBOXYPTASEA"/>
</dbReference>
<dbReference type="SMART" id="SM00631">
    <property type="entry name" value="Zn_pept"/>
    <property type="match status" value="1"/>
</dbReference>
<dbReference type="SUPFAM" id="SSF54897">
    <property type="entry name" value="Protease propeptides/inhibitors"/>
    <property type="match status" value="1"/>
</dbReference>
<dbReference type="SUPFAM" id="SSF53187">
    <property type="entry name" value="Zn-dependent exopeptidases"/>
    <property type="match status" value="1"/>
</dbReference>
<dbReference type="PROSITE" id="PS52035">
    <property type="entry name" value="PEPTIDASE_M14"/>
    <property type="match status" value="1"/>
</dbReference>
<reference key="1">
    <citation type="journal article" date="2005" name="Nature">
        <title>Genome sequencing and analysis of Aspergillus oryzae.</title>
        <authorList>
            <person name="Machida M."/>
            <person name="Asai K."/>
            <person name="Sano M."/>
            <person name="Tanaka T."/>
            <person name="Kumagai T."/>
            <person name="Terai G."/>
            <person name="Kusumoto K."/>
            <person name="Arima T."/>
            <person name="Akita O."/>
            <person name="Kashiwagi Y."/>
            <person name="Abe K."/>
            <person name="Gomi K."/>
            <person name="Horiuchi H."/>
            <person name="Kitamoto K."/>
            <person name="Kobayashi T."/>
            <person name="Takeuchi M."/>
            <person name="Denning D.W."/>
            <person name="Galagan J.E."/>
            <person name="Nierman W.C."/>
            <person name="Yu J."/>
            <person name="Archer D.B."/>
            <person name="Bennett J.W."/>
            <person name="Bhatnagar D."/>
            <person name="Cleveland T.E."/>
            <person name="Fedorova N.D."/>
            <person name="Gotoh O."/>
            <person name="Horikawa H."/>
            <person name="Hosoyama A."/>
            <person name="Ichinomiya M."/>
            <person name="Igarashi R."/>
            <person name="Iwashita K."/>
            <person name="Juvvadi P.R."/>
            <person name="Kato M."/>
            <person name="Kato Y."/>
            <person name="Kin T."/>
            <person name="Kokubun A."/>
            <person name="Maeda H."/>
            <person name="Maeyama N."/>
            <person name="Maruyama J."/>
            <person name="Nagasaki H."/>
            <person name="Nakajima T."/>
            <person name="Oda K."/>
            <person name="Okada K."/>
            <person name="Paulsen I."/>
            <person name="Sakamoto K."/>
            <person name="Sawano T."/>
            <person name="Takahashi M."/>
            <person name="Takase K."/>
            <person name="Terabayashi Y."/>
            <person name="Wortman J.R."/>
            <person name="Yamada O."/>
            <person name="Yamagata Y."/>
            <person name="Anazawa H."/>
            <person name="Hata Y."/>
            <person name="Koide Y."/>
            <person name="Komori T."/>
            <person name="Koyama Y."/>
            <person name="Minetoki T."/>
            <person name="Suharnan S."/>
            <person name="Tanaka A."/>
            <person name="Isono K."/>
            <person name="Kuhara S."/>
            <person name="Ogasawara N."/>
            <person name="Kikuchi H."/>
        </authorList>
    </citation>
    <scope>NUCLEOTIDE SEQUENCE [LARGE SCALE GENOMIC DNA]</scope>
    <source>
        <strain>ATCC 42149 / RIB 40</strain>
    </source>
</reference>
<evidence type="ECO:0000250" key="1">
    <source>
        <dbReference type="UniProtKB" id="P00730"/>
    </source>
</evidence>
<evidence type="ECO:0000250" key="2">
    <source>
        <dbReference type="UniProtKB" id="P15085"/>
    </source>
</evidence>
<evidence type="ECO:0000250" key="3">
    <source>
        <dbReference type="UniProtKB" id="P38836"/>
    </source>
</evidence>
<evidence type="ECO:0000255" key="4"/>
<evidence type="ECO:0000255" key="5">
    <source>
        <dbReference type="PROSITE-ProRule" id="PRU01379"/>
    </source>
</evidence>
<evidence type="ECO:0000256" key="6">
    <source>
        <dbReference type="SAM" id="MobiDB-lite"/>
    </source>
</evidence>
<evidence type="ECO:0000305" key="7"/>
<comment type="function">
    <text evidence="3">Inactive carboxypeptidase that may play a role in cell wall organization and biogenesis.</text>
</comment>
<comment type="cofactor">
    <cofactor evidence="1">
        <name>Zn(2+)</name>
        <dbReference type="ChEBI" id="CHEBI:29105"/>
    </cofactor>
    <text evidence="1">Binds 1 zinc ion per subunit.</text>
</comment>
<comment type="subcellular location">
    <subcellularLocation>
        <location evidence="3">Vacuole</location>
    </subcellularLocation>
    <subcellularLocation>
        <location evidence="3">Secreted</location>
    </subcellularLocation>
</comment>
<comment type="similarity">
    <text evidence="7">Belongs to the peptidase M14 family.</text>
</comment>
<comment type="caution">
    <text evidence="3">Lacks the conserved Glu residue in position 482 essential for carbopeptidase activity. The mature form lacks catalytic activity towards synthetic peptide substrates.</text>
</comment>
<gene>
    <name type="primary">ecm14</name>
    <name type="ORF">AO090011000821</name>
</gene>
<keyword id="KW-0961">Cell wall biogenesis/degradation</keyword>
<keyword id="KW-1015">Disulfide bond</keyword>
<keyword id="KW-0325">Glycoprotein</keyword>
<keyword id="KW-0479">Metal-binding</keyword>
<keyword id="KW-1185">Reference proteome</keyword>
<keyword id="KW-0964">Secreted</keyword>
<keyword id="KW-0732">Signal</keyword>
<keyword id="KW-0926">Vacuole</keyword>
<keyword id="KW-0862">Zinc</keyword>